<sequence length="448" mass="48811">MNRALVLLLYVCTVSCLASSKVILMRNNITLSFDDIEANFAPSVKGTGEIGVVYVAEPLDACQNLMNKPEQSSNETSPFVLIVRGGCSFEEKVRKAQRAGFKAAIIYDNEDRGTLIAMAGNSGGIRIHAVFVTKETGEVLKEYAGFPDTKVWLIPSFENSAWSIMAVSFISLLAMSAVLATCFFVRRHRIRRRTSRSSRVREFHGMSRRLVKAMPSLIFSSFHEDNTTAFTCAICLEDYTVGDKLRLLPCCHKFHAACVDSWLTSWRTFCPVCKRDARTSTGEPPASESTPLLSSAASSFTSSSLHSSVRSSALLIGPSLGSLPTSISFSPAYASSSYIRQSFQSSSNRRSPPISVSRSSVDLRQQAASPSPSPSQRSYISHMASPQSLGYPTISPFNTRYMSPYRPSPSNASPAMAGSSNYPLNPLRYSESAGTFSPYASANSLPDC</sequence>
<protein>
    <recommendedName>
        <fullName>Receptor homology region, transmembrane domain- and RING domain-containing protein 2</fullName>
        <shortName>AtRMR2</shortName>
    </recommendedName>
    <alternativeName>
        <fullName>ReMembR-H2 protein JR702</fullName>
    </alternativeName>
</protein>
<gene>
    <name type="primary">RMR2</name>
    <name type="synonym">JR702</name>
    <name type="ordered locus">At1g71980</name>
    <name type="ORF">F17M19.13</name>
</gene>
<evidence type="ECO:0000250" key="1"/>
<evidence type="ECO:0000255" key="2"/>
<evidence type="ECO:0000255" key="3">
    <source>
        <dbReference type="PROSITE-ProRule" id="PRU00175"/>
    </source>
</evidence>
<evidence type="ECO:0000256" key="4">
    <source>
        <dbReference type="SAM" id="MobiDB-lite"/>
    </source>
</evidence>
<evidence type="ECO:0000269" key="5">
    <source>
    </source>
</evidence>
<evidence type="ECO:0000305" key="6"/>
<evidence type="ECO:0000305" key="7">
    <source>
    </source>
</evidence>
<name>RMR2_ARATH</name>
<reference key="1">
    <citation type="journal article" date="2000" name="Nature">
        <title>Sequence and analysis of chromosome 1 of the plant Arabidopsis thaliana.</title>
        <authorList>
            <person name="Theologis A."/>
            <person name="Ecker J.R."/>
            <person name="Palm C.J."/>
            <person name="Federspiel N.A."/>
            <person name="Kaul S."/>
            <person name="White O."/>
            <person name="Alonso J."/>
            <person name="Altafi H."/>
            <person name="Araujo R."/>
            <person name="Bowman C.L."/>
            <person name="Brooks S.Y."/>
            <person name="Buehler E."/>
            <person name="Chan A."/>
            <person name="Chao Q."/>
            <person name="Chen H."/>
            <person name="Cheuk R.F."/>
            <person name="Chin C.W."/>
            <person name="Chung M.K."/>
            <person name="Conn L."/>
            <person name="Conway A.B."/>
            <person name="Conway A.R."/>
            <person name="Creasy T.H."/>
            <person name="Dewar K."/>
            <person name="Dunn P."/>
            <person name="Etgu P."/>
            <person name="Feldblyum T.V."/>
            <person name="Feng J.-D."/>
            <person name="Fong B."/>
            <person name="Fujii C.Y."/>
            <person name="Gill J.E."/>
            <person name="Goldsmith A.D."/>
            <person name="Haas B."/>
            <person name="Hansen N.F."/>
            <person name="Hughes B."/>
            <person name="Huizar L."/>
            <person name="Hunter J.L."/>
            <person name="Jenkins J."/>
            <person name="Johnson-Hopson C."/>
            <person name="Khan S."/>
            <person name="Khaykin E."/>
            <person name="Kim C.J."/>
            <person name="Koo H.L."/>
            <person name="Kremenetskaia I."/>
            <person name="Kurtz D.B."/>
            <person name="Kwan A."/>
            <person name="Lam B."/>
            <person name="Langin-Hooper S."/>
            <person name="Lee A."/>
            <person name="Lee J.M."/>
            <person name="Lenz C.A."/>
            <person name="Li J.H."/>
            <person name="Li Y.-P."/>
            <person name="Lin X."/>
            <person name="Liu S.X."/>
            <person name="Liu Z.A."/>
            <person name="Luros J.S."/>
            <person name="Maiti R."/>
            <person name="Marziali A."/>
            <person name="Militscher J."/>
            <person name="Miranda M."/>
            <person name="Nguyen M."/>
            <person name="Nierman W.C."/>
            <person name="Osborne B.I."/>
            <person name="Pai G."/>
            <person name="Peterson J."/>
            <person name="Pham P.K."/>
            <person name="Rizzo M."/>
            <person name="Rooney T."/>
            <person name="Rowley D."/>
            <person name="Sakano H."/>
            <person name="Salzberg S.L."/>
            <person name="Schwartz J.R."/>
            <person name="Shinn P."/>
            <person name="Southwick A.M."/>
            <person name="Sun H."/>
            <person name="Tallon L.J."/>
            <person name="Tambunga G."/>
            <person name="Toriumi M.J."/>
            <person name="Town C.D."/>
            <person name="Utterback T."/>
            <person name="Van Aken S."/>
            <person name="Vaysberg M."/>
            <person name="Vysotskaia V.S."/>
            <person name="Walker M."/>
            <person name="Wu D."/>
            <person name="Yu G."/>
            <person name="Fraser C.M."/>
            <person name="Venter J.C."/>
            <person name="Davis R.W."/>
        </authorList>
    </citation>
    <scope>NUCLEOTIDE SEQUENCE [LARGE SCALE GENOMIC DNA]</scope>
    <source>
        <strain>cv. Columbia</strain>
    </source>
</reference>
<reference key="2">
    <citation type="journal article" date="2017" name="Plant J.">
        <title>Araport11: a complete reannotation of the Arabidopsis thaliana reference genome.</title>
        <authorList>
            <person name="Cheng C.Y."/>
            <person name="Krishnakumar V."/>
            <person name="Chan A.P."/>
            <person name="Thibaud-Nissen F."/>
            <person name="Schobel S."/>
            <person name="Town C.D."/>
        </authorList>
    </citation>
    <scope>GENOME REANNOTATION</scope>
    <source>
        <strain>cv. Columbia</strain>
    </source>
</reference>
<reference key="3">
    <citation type="journal article" date="2003" name="Science">
        <title>Empirical analysis of transcriptional activity in the Arabidopsis genome.</title>
        <authorList>
            <person name="Yamada K."/>
            <person name="Lim J."/>
            <person name="Dale J.M."/>
            <person name="Chen H."/>
            <person name="Shinn P."/>
            <person name="Palm C.J."/>
            <person name="Southwick A.M."/>
            <person name="Wu H.C."/>
            <person name="Kim C.J."/>
            <person name="Nguyen M."/>
            <person name="Pham P.K."/>
            <person name="Cheuk R.F."/>
            <person name="Karlin-Newmann G."/>
            <person name="Liu S.X."/>
            <person name="Lam B."/>
            <person name="Sakano H."/>
            <person name="Wu T."/>
            <person name="Yu G."/>
            <person name="Miranda M."/>
            <person name="Quach H.L."/>
            <person name="Tripp M."/>
            <person name="Chang C.H."/>
            <person name="Lee J.M."/>
            <person name="Toriumi M.J."/>
            <person name="Chan M.M."/>
            <person name="Tang C.C."/>
            <person name="Onodera C.S."/>
            <person name="Deng J.M."/>
            <person name="Akiyama K."/>
            <person name="Ansari Y."/>
            <person name="Arakawa T."/>
            <person name="Banh J."/>
            <person name="Banno F."/>
            <person name="Bowser L."/>
            <person name="Brooks S.Y."/>
            <person name="Carninci P."/>
            <person name="Chao Q."/>
            <person name="Choy N."/>
            <person name="Enju A."/>
            <person name="Goldsmith A.D."/>
            <person name="Gurjal M."/>
            <person name="Hansen N.F."/>
            <person name="Hayashizaki Y."/>
            <person name="Johnson-Hopson C."/>
            <person name="Hsuan V.W."/>
            <person name="Iida K."/>
            <person name="Karnes M."/>
            <person name="Khan S."/>
            <person name="Koesema E."/>
            <person name="Ishida J."/>
            <person name="Jiang P.X."/>
            <person name="Jones T."/>
            <person name="Kawai J."/>
            <person name="Kamiya A."/>
            <person name="Meyers C."/>
            <person name="Nakajima M."/>
            <person name="Narusaka M."/>
            <person name="Seki M."/>
            <person name="Sakurai T."/>
            <person name="Satou M."/>
            <person name="Tamse R."/>
            <person name="Vaysberg M."/>
            <person name="Wallender E.K."/>
            <person name="Wong C."/>
            <person name="Yamamura Y."/>
            <person name="Yuan S."/>
            <person name="Shinozaki K."/>
            <person name="Davis R.W."/>
            <person name="Theologis A."/>
            <person name="Ecker J.R."/>
        </authorList>
    </citation>
    <scope>NUCLEOTIDE SEQUENCE [LARGE SCALE MRNA]</scope>
    <source>
        <strain>cv. Columbia</strain>
    </source>
</reference>
<reference key="4">
    <citation type="journal article" date="2000" name="J. Cell Biol.">
        <title>Biogenesis of the protein storage vacuole crystalloid.</title>
        <authorList>
            <person name="Jiang L."/>
            <person name="Phillips T.E."/>
            <person name="Rogers S.W."/>
            <person name="Rogers J.C."/>
        </authorList>
    </citation>
    <scope>NUCLEOTIDE SEQUENCE [MRNA] OF 5-448</scope>
    <scope>SUBCELLULAR LOCATION</scope>
</reference>
<comment type="function">
    <text evidence="1">Involved in the trafficking of vacuolar proteins. May function as a sorting receptor for protein trafficking to the protein storage vacuole (PSV) (By similarity).</text>
</comment>
<comment type="subcellular location">
    <subcellularLocation>
        <location evidence="5">Protein storage vacuole membrane</location>
    </subcellularLocation>
    <subcellularLocation>
        <location evidence="7">Golgi apparatus membrane</location>
        <topology evidence="7">Single-pass type I membrane protein</topology>
    </subcellularLocation>
    <text>Traffics through the Golgi apparatus before reaching the vacuolar compartment.</text>
</comment>
<comment type="sequence caution" evidence="6">
    <conflict type="erroneous initiation">
        <sequence resource="EMBL-CDS" id="AAG52220"/>
    </conflict>
    <text>Truncated N-terminus.</text>
</comment>
<dbReference type="EMBL" id="AC021665">
    <property type="protein sequence ID" value="AAG52220.1"/>
    <property type="status" value="ALT_INIT"/>
    <property type="molecule type" value="Genomic_DNA"/>
</dbReference>
<dbReference type="EMBL" id="CP002684">
    <property type="protein sequence ID" value="AEE35260.1"/>
    <property type="molecule type" value="Genomic_DNA"/>
</dbReference>
<dbReference type="EMBL" id="AY065385">
    <property type="protein sequence ID" value="AAL38826.1"/>
    <property type="molecule type" value="mRNA"/>
</dbReference>
<dbReference type="EMBL" id="AY133843">
    <property type="protein sequence ID" value="AAM91777.1"/>
    <property type="molecule type" value="mRNA"/>
</dbReference>
<dbReference type="EMBL" id="AF218808">
    <property type="protein sequence ID" value="AAF32326.1"/>
    <property type="molecule type" value="mRNA"/>
</dbReference>
<dbReference type="PIR" id="G96742">
    <property type="entry name" value="G96742"/>
</dbReference>
<dbReference type="RefSeq" id="NP_177343.2">
    <property type="nucleotide sequence ID" value="NM_105856.7"/>
</dbReference>
<dbReference type="SMR" id="Q8VZ14"/>
<dbReference type="FunCoup" id="Q8VZ14">
    <property type="interactions" value="3877"/>
</dbReference>
<dbReference type="STRING" id="3702.Q8VZ14"/>
<dbReference type="GlyCosmos" id="Q8VZ14">
    <property type="glycosylation" value="2 sites, No reported glycans"/>
</dbReference>
<dbReference type="GlyGen" id="Q8VZ14">
    <property type="glycosylation" value="2 sites"/>
</dbReference>
<dbReference type="iPTMnet" id="Q8VZ14"/>
<dbReference type="PaxDb" id="3702-AT1G71980.1"/>
<dbReference type="ProteomicsDB" id="227961"/>
<dbReference type="EnsemblPlants" id="AT1G71980.1">
    <property type="protein sequence ID" value="AT1G71980.1"/>
    <property type="gene ID" value="AT1G71980"/>
</dbReference>
<dbReference type="GeneID" id="843529"/>
<dbReference type="Gramene" id="AT1G71980.1">
    <property type="protein sequence ID" value="AT1G71980.1"/>
    <property type="gene ID" value="AT1G71980"/>
</dbReference>
<dbReference type="KEGG" id="ath:AT1G71980"/>
<dbReference type="Araport" id="AT1G71980"/>
<dbReference type="TAIR" id="AT1G71980">
    <property type="gene designation" value="RMR2"/>
</dbReference>
<dbReference type="eggNOG" id="KOG4628">
    <property type="taxonomic scope" value="Eukaryota"/>
</dbReference>
<dbReference type="HOGENOM" id="CLU_035275_2_0_1"/>
<dbReference type="InParanoid" id="Q8VZ14"/>
<dbReference type="OMA" id="VYTIFTV"/>
<dbReference type="PhylomeDB" id="Q8VZ14"/>
<dbReference type="PRO" id="PR:Q8VZ14"/>
<dbReference type="Proteomes" id="UP000006548">
    <property type="component" value="Chromosome 1"/>
</dbReference>
<dbReference type="ExpressionAtlas" id="Q8VZ14">
    <property type="expression patterns" value="baseline and differential"/>
</dbReference>
<dbReference type="GO" id="GO:0000139">
    <property type="term" value="C:Golgi membrane"/>
    <property type="evidence" value="ECO:0000314"/>
    <property type="project" value="UniProtKB"/>
</dbReference>
<dbReference type="GO" id="GO:0000326">
    <property type="term" value="C:protein storage vacuole"/>
    <property type="evidence" value="ECO:0000314"/>
    <property type="project" value="UniProtKB"/>
</dbReference>
<dbReference type="GO" id="GO:0032586">
    <property type="term" value="C:protein storage vacuole membrane"/>
    <property type="evidence" value="ECO:0007669"/>
    <property type="project" value="UniProtKB-SubCell"/>
</dbReference>
<dbReference type="GO" id="GO:0008270">
    <property type="term" value="F:zinc ion binding"/>
    <property type="evidence" value="ECO:0007669"/>
    <property type="project" value="UniProtKB-KW"/>
</dbReference>
<dbReference type="GO" id="GO:0015031">
    <property type="term" value="P:protein transport"/>
    <property type="evidence" value="ECO:0007669"/>
    <property type="project" value="UniProtKB-KW"/>
</dbReference>
<dbReference type="CDD" id="cd02123">
    <property type="entry name" value="PA_C_RZF_like"/>
    <property type="match status" value="1"/>
</dbReference>
<dbReference type="FunFam" id="3.30.40.10:FF:000276">
    <property type="entry name" value="Receptor homology region transmembrane domain-and RING domain-containing protein 2"/>
    <property type="match status" value="1"/>
</dbReference>
<dbReference type="FunFam" id="3.50.30.30:FF:000020">
    <property type="entry name" value="Receptor homology region transmembrane domain-and RING domain-containing protein 2"/>
    <property type="match status" value="1"/>
</dbReference>
<dbReference type="Gene3D" id="3.50.30.30">
    <property type="match status" value="1"/>
</dbReference>
<dbReference type="Gene3D" id="3.30.40.10">
    <property type="entry name" value="Zinc/RING finger domain, C3HC4 (zinc finger)"/>
    <property type="match status" value="1"/>
</dbReference>
<dbReference type="InterPro" id="IPR051653">
    <property type="entry name" value="E3_ligase_sorting_rcpt"/>
</dbReference>
<dbReference type="InterPro" id="IPR046450">
    <property type="entry name" value="PA_dom_sf"/>
</dbReference>
<dbReference type="InterPro" id="IPR003137">
    <property type="entry name" value="PA_domain"/>
</dbReference>
<dbReference type="InterPro" id="IPR001841">
    <property type="entry name" value="Znf_RING"/>
</dbReference>
<dbReference type="InterPro" id="IPR013083">
    <property type="entry name" value="Znf_RING/FYVE/PHD"/>
</dbReference>
<dbReference type="InterPro" id="IPR044744">
    <property type="entry name" value="ZNRF4/RNF13/RNF167_PA"/>
</dbReference>
<dbReference type="PANTHER" id="PTHR47168">
    <property type="entry name" value="RING ZINC FINGER DOMAIN SUPERFAMILY PROTEIN-RELATED"/>
    <property type="match status" value="1"/>
</dbReference>
<dbReference type="PANTHER" id="PTHR47168:SF5">
    <property type="entry name" value="RING-TYPE DOMAIN-CONTAINING PROTEIN"/>
    <property type="match status" value="1"/>
</dbReference>
<dbReference type="Pfam" id="PF02225">
    <property type="entry name" value="PA"/>
    <property type="match status" value="1"/>
</dbReference>
<dbReference type="Pfam" id="PF13639">
    <property type="entry name" value="zf-RING_2"/>
    <property type="match status" value="1"/>
</dbReference>
<dbReference type="SMART" id="SM00184">
    <property type="entry name" value="RING"/>
    <property type="match status" value="1"/>
</dbReference>
<dbReference type="SUPFAM" id="SSF52025">
    <property type="entry name" value="PA domain"/>
    <property type="match status" value="1"/>
</dbReference>
<dbReference type="SUPFAM" id="SSF57850">
    <property type="entry name" value="RING/U-box"/>
    <property type="match status" value="1"/>
</dbReference>
<dbReference type="PROSITE" id="PS50089">
    <property type="entry name" value="ZF_RING_2"/>
    <property type="match status" value="1"/>
</dbReference>
<accession>Q8VZ14</accession>
<accession>Q9C8W4</accession>
<accession>Q9M621</accession>
<keyword id="KW-1015">Disulfide bond</keyword>
<keyword id="KW-0325">Glycoprotein</keyword>
<keyword id="KW-0333">Golgi apparatus</keyword>
<keyword id="KW-0472">Membrane</keyword>
<keyword id="KW-0479">Metal-binding</keyword>
<keyword id="KW-0653">Protein transport</keyword>
<keyword id="KW-1185">Reference proteome</keyword>
<keyword id="KW-0732">Signal</keyword>
<keyword id="KW-0812">Transmembrane</keyword>
<keyword id="KW-1133">Transmembrane helix</keyword>
<keyword id="KW-0813">Transport</keyword>
<keyword id="KW-0926">Vacuole</keyword>
<keyword id="KW-0862">Zinc</keyword>
<keyword id="KW-0863">Zinc-finger</keyword>
<proteinExistence type="evidence at transcript level"/>
<feature type="signal peptide" evidence="2">
    <location>
        <begin position="1"/>
        <end position="20"/>
    </location>
</feature>
<feature type="chain" id="PRO_0000425115" description="Receptor homology region, transmembrane domain- and RING domain-containing protein 2">
    <location>
        <begin position="21"/>
        <end position="448"/>
    </location>
</feature>
<feature type="topological domain" description="Lumenal" evidence="2">
    <location>
        <begin position="21"/>
        <end position="163"/>
    </location>
</feature>
<feature type="transmembrane region" description="Helical" evidence="2">
    <location>
        <begin position="164"/>
        <end position="184"/>
    </location>
</feature>
<feature type="topological domain" description="Cytoplasmic" evidence="2">
    <location>
        <begin position="185"/>
        <end position="448"/>
    </location>
</feature>
<feature type="domain" description="PA">
    <location>
        <begin position="60"/>
        <end position="144"/>
    </location>
</feature>
<feature type="zinc finger region" description="RING-type; atypical" evidence="3">
    <location>
        <begin position="232"/>
        <end position="274"/>
    </location>
</feature>
<feature type="region of interest" description="Disordered" evidence="4">
    <location>
        <begin position="344"/>
        <end position="380"/>
    </location>
</feature>
<feature type="region of interest" description="Disordered" evidence="4">
    <location>
        <begin position="402"/>
        <end position="424"/>
    </location>
</feature>
<feature type="compositionally biased region" description="Low complexity" evidence="4">
    <location>
        <begin position="344"/>
        <end position="378"/>
    </location>
</feature>
<feature type="compositionally biased region" description="Polar residues" evidence="4">
    <location>
        <begin position="408"/>
        <end position="423"/>
    </location>
</feature>
<feature type="glycosylation site" description="N-linked (GlcNAc...) asparagine" evidence="2">
    <location>
        <position position="28"/>
    </location>
</feature>
<feature type="glycosylation site" description="N-linked (GlcNAc...) asparagine" evidence="2">
    <location>
        <position position="74"/>
    </location>
</feature>
<feature type="disulfide bond" evidence="2">
    <location>
        <begin position="62"/>
        <end position="87"/>
    </location>
</feature>
<feature type="sequence conflict" description="In Ref. 4; AAF32326." evidence="6" ref="4">
    <original>F</original>
    <variation>I</variation>
    <location>
        <position position="40"/>
    </location>
</feature>
<organism>
    <name type="scientific">Arabidopsis thaliana</name>
    <name type="common">Mouse-ear cress</name>
    <dbReference type="NCBI Taxonomy" id="3702"/>
    <lineage>
        <taxon>Eukaryota</taxon>
        <taxon>Viridiplantae</taxon>
        <taxon>Streptophyta</taxon>
        <taxon>Embryophyta</taxon>
        <taxon>Tracheophyta</taxon>
        <taxon>Spermatophyta</taxon>
        <taxon>Magnoliopsida</taxon>
        <taxon>eudicotyledons</taxon>
        <taxon>Gunneridae</taxon>
        <taxon>Pentapetalae</taxon>
        <taxon>rosids</taxon>
        <taxon>malvids</taxon>
        <taxon>Brassicales</taxon>
        <taxon>Brassicaceae</taxon>
        <taxon>Camelineae</taxon>
        <taxon>Arabidopsis</taxon>
    </lineage>
</organism>